<feature type="chain" id="PRO_0000105897" description="UPF0344 protein SAS0839">
    <location>
        <begin position="1"/>
        <end position="129"/>
    </location>
</feature>
<feature type="transmembrane region" description="Helical" evidence="1">
    <location>
        <begin position="1"/>
        <end position="21"/>
    </location>
</feature>
<feature type="transmembrane region" description="Helical" evidence="1">
    <location>
        <begin position="36"/>
        <end position="56"/>
    </location>
</feature>
<feature type="transmembrane region" description="Helical" evidence="1">
    <location>
        <begin position="67"/>
        <end position="87"/>
    </location>
</feature>
<feature type="transmembrane region" description="Helical" evidence="1">
    <location>
        <begin position="99"/>
        <end position="119"/>
    </location>
</feature>
<proteinExistence type="inferred from homology"/>
<reference key="1">
    <citation type="journal article" date="2004" name="Proc. Natl. Acad. Sci. U.S.A.">
        <title>Complete genomes of two clinical Staphylococcus aureus strains: evidence for the rapid evolution of virulence and drug resistance.</title>
        <authorList>
            <person name="Holden M.T.G."/>
            <person name="Feil E.J."/>
            <person name="Lindsay J.A."/>
            <person name="Peacock S.J."/>
            <person name="Day N.P.J."/>
            <person name="Enright M.C."/>
            <person name="Foster T.J."/>
            <person name="Moore C.E."/>
            <person name="Hurst L."/>
            <person name="Atkin R."/>
            <person name="Barron A."/>
            <person name="Bason N."/>
            <person name="Bentley S.D."/>
            <person name="Chillingworth C."/>
            <person name="Chillingworth T."/>
            <person name="Churcher C."/>
            <person name="Clark L."/>
            <person name="Corton C."/>
            <person name="Cronin A."/>
            <person name="Doggett J."/>
            <person name="Dowd L."/>
            <person name="Feltwell T."/>
            <person name="Hance Z."/>
            <person name="Harris B."/>
            <person name="Hauser H."/>
            <person name="Holroyd S."/>
            <person name="Jagels K."/>
            <person name="James K.D."/>
            <person name="Lennard N."/>
            <person name="Line A."/>
            <person name="Mayes R."/>
            <person name="Moule S."/>
            <person name="Mungall K."/>
            <person name="Ormond D."/>
            <person name="Quail M.A."/>
            <person name="Rabbinowitsch E."/>
            <person name="Rutherford K.M."/>
            <person name="Sanders M."/>
            <person name="Sharp S."/>
            <person name="Simmonds M."/>
            <person name="Stevens K."/>
            <person name="Whitehead S."/>
            <person name="Barrell B.G."/>
            <person name="Spratt B.G."/>
            <person name="Parkhill J."/>
        </authorList>
    </citation>
    <scope>NUCLEOTIDE SEQUENCE [LARGE SCALE GENOMIC DNA]</scope>
    <source>
        <strain>MSSA476</strain>
    </source>
</reference>
<protein>
    <recommendedName>
        <fullName evidence="1">UPF0344 protein SAS0839</fullName>
    </recommendedName>
</protein>
<name>Y839_STAAS</name>
<organism>
    <name type="scientific">Staphylococcus aureus (strain MSSA476)</name>
    <dbReference type="NCBI Taxonomy" id="282459"/>
    <lineage>
        <taxon>Bacteria</taxon>
        <taxon>Bacillati</taxon>
        <taxon>Bacillota</taxon>
        <taxon>Bacilli</taxon>
        <taxon>Bacillales</taxon>
        <taxon>Staphylococcaceae</taxon>
        <taxon>Staphylococcus</taxon>
    </lineage>
</organism>
<gene>
    <name type="ordered locus">SAS0839</name>
</gene>
<keyword id="KW-1003">Cell membrane</keyword>
<keyword id="KW-0472">Membrane</keyword>
<keyword id="KW-0812">Transmembrane</keyword>
<keyword id="KW-1133">Transmembrane helix</keyword>
<dbReference type="EMBL" id="BX571857">
    <property type="protein sequence ID" value="CAG42614.1"/>
    <property type="molecule type" value="Genomic_DNA"/>
</dbReference>
<dbReference type="RefSeq" id="WP_000902805.1">
    <property type="nucleotide sequence ID" value="NC_002953.3"/>
</dbReference>
<dbReference type="KEGG" id="sas:SAS0839"/>
<dbReference type="HOGENOM" id="CLU_146641_2_0_9"/>
<dbReference type="GO" id="GO:0005886">
    <property type="term" value="C:plasma membrane"/>
    <property type="evidence" value="ECO:0007669"/>
    <property type="project" value="UniProtKB-SubCell"/>
</dbReference>
<dbReference type="HAMAP" id="MF_01536">
    <property type="entry name" value="UPF0344"/>
    <property type="match status" value="1"/>
</dbReference>
<dbReference type="InterPro" id="IPR010899">
    <property type="entry name" value="UPF0344"/>
</dbReference>
<dbReference type="NCBIfam" id="NF010195">
    <property type="entry name" value="PRK13673.1-2"/>
    <property type="match status" value="1"/>
</dbReference>
<dbReference type="NCBIfam" id="NF010199">
    <property type="entry name" value="PRK13673.1-6"/>
    <property type="match status" value="1"/>
</dbReference>
<dbReference type="Pfam" id="PF07457">
    <property type="entry name" value="DUF1516"/>
    <property type="match status" value="1"/>
</dbReference>
<accession>Q6GAV7</accession>
<comment type="subcellular location">
    <subcellularLocation>
        <location evidence="1">Cell membrane</location>
        <topology evidence="1">Multi-pass membrane protein</topology>
    </subcellularLocation>
</comment>
<comment type="similarity">
    <text evidence="1">Belongs to the UPF0344 family.</text>
</comment>
<evidence type="ECO:0000255" key="1">
    <source>
        <dbReference type="HAMAP-Rule" id="MF_01536"/>
    </source>
</evidence>
<sequence>MLHLHILSWVLAIILFIATYLNISKNQGGSPFFKPLHMILRLFMLLTLISGFWILIQSFMNGGANHMLLTLKMLCGVAVVGLMEVSIAKRKRHEQSHKMFWITMALIIITMVLGVILPLGPISKLFGIG</sequence>